<evidence type="ECO:0000250" key="1"/>
<evidence type="ECO:0000255" key="2"/>
<evidence type="ECO:0000269" key="3">
    <source>
    </source>
</evidence>
<evidence type="ECO:0000269" key="4">
    <source>
    </source>
</evidence>
<evidence type="ECO:0000305" key="5"/>
<feature type="signal peptide" evidence="2">
    <location>
        <begin position="1"/>
        <end position="22"/>
    </location>
</feature>
<feature type="propeptide" id="PRO_0000400759" evidence="3 4">
    <location>
        <begin position="23"/>
        <end position="48"/>
    </location>
</feature>
<feature type="peptide" id="PRO_0000400760" description="U4-theraphotoxin-Hhn1a">
    <location>
        <begin position="49"/>
        <end position="85"/>
    </location>
</feature>
<feature type="disulfide bond" evidence="1">
    <location>
        <begin position="52"/>
        <end position="66"/>
    </location>
</feature>
<feature type="disulfide bond" evidence="1">
    <location>
        <begin position="56"/>
        <end position="77"/>
    </location>
</feature>
<feature type="disulfide bond" evidence="1">
    <location>
        <begin position="71"/>
        <end position="82"/>
    </location>
</feature>
<accession>D2Y2K9</accession>
<dbReference type="EMBL" id="GU293086">
    <property type="protein sequence ID" value="ADB56902.1"/>
    <property type="molecule type" value="Genomic_DNA"/>
</dbReference>
<dbReference type="SMR" id="D2Y2K9"/>
<dbReference type="ArachnoServer" id="AS001783">
    <property type="toxin name" value="U4-theraphotoxin-Hhn1a"/>
</dbReference>
<dbReference type="GO" id="GO:0005576">
    <property type="term" value="C:extracellular region"/>
    <property type="evidence" value="ECO:0007669"/>
    <property type="project" value="UniProtKB-SubCell"/>
</dbReference>
<dbReference type="GO" id="GO:0035792">
    <property type="term" value="C:host cell postsynaptic membrane"/>
    <property type="evidence" value="ECO:0007669"/>
    <property type="project" value="UniProtKB-KW"/>
</dbReference>
<dbReference type="GO" id="GO:0090729">
    <property type="term" value="F:toxin activity"/>
    <property type="evidence" value="ECO:0007669"/>
    <property type="project" value="UniProtKB-KW"/>
</dbReference>
<dbReference type="InterPro" id="IPR012625">
    <property type="entry name" value="Hwtx-2-like"/>
</dbReference>
<dbReference type="Pfam" id="PF08089">
    <property type="entry name" value="Toxin_20"/>
    <property type="match status" value="1"/>
</dbReference>
<dbReference type="SUPFAM" id="SSF57059">
    <property type="entry name" value="omega toxin-like"/>
    <property type="match status" value="1"/>
</dbReference>
<dbReference type="PROSITE" id="PS60022">
    <property type="entry name" value="HWTX_2"/>
    <property type="match status" value="1"/>
</dbReference>
<comment type="function">
    <text evidence="4">Neurotoxin active on both insects and mammals.</text>
</comment>
<comment type="subunit">
    <text>Monomer.</text>
</comment>
<comment type="subcellular location">
    <subcellularLocation>
        <location>Secreted</location>
    </subcellularLocation>
</comment>
<comment type="tissue specificity">
    <text>Expressed by the venom gland.</text>
</comment>
<comment type="mass spectrometry" mass="4253.38" method="MALDI" evidence="4"/>
<comment type="toxic dose">
    <text evidence="4">LD(50) is 1.41 mg/kg by intracerebroventricular injection into mice.</text>
</comment>
<comment type="toxic dose">
    <text evidence="4">PD(50) is 16 mg/kg in cockroaches.</text>
</comment>
<comment type="similarity">
    <text evidence="5">Belongs to the neurotoxin 12 (Hwtx-2) family. 02 (Hwtx-2) subfamily.</text>
</comment>
<organism>
    <name type="scientific">Cyriopagopus hainanus</name>
    <name type="common">Chinese bird spider</name>
    <name type="synonym">Haplopelma hainanum</name>
    <dbReference type="NCBI Taxonomy" id="209901"/>
    <lineage>
        <taxon>Eukaryota</taxon>
        <taxon>Metazoa</taxon>
        <taxon>Ecdysozoa</taxon>
        <taxon>Arthropoda</taxon>
        <taxon>Chelicerata</taxon>
        <taxon>Arachnida</taxon>
        <taxon>Araneae</taxon>
        <taxon>Mygalomorphae</taxon>
        <taxon>Theraphosidae</taxon>
        <taxon>Haplopelma</taxon>
    </lineage>
</organism>
<keyword id="KW-0903">Direct protein sequencing</keyword>
<keyword id="KW-1015">Disulfide bond</keyword>
<keyword id="KW-0528">Neurotoxin</keyword>
<keyword id="KW-0629">Postsynaptic neurotoxin</keyword>
<keyword id="KW-0964">Secreted</keyword>
<keyword id="KW-0732">Signal</keyword>
<keyword id="KW-0800">Toxin</keyword>
<sequence length="85" mass="9426">MKVTLIVILTCAAVLVLHTTAAEELEAESQLMEVGMPDTELAAVDEERLFECSVSCEIEKEGNKDCKKKKCKGGWKCKFNMCVKV</sequence>
<proteinExistence type="evidence at protein level"/>
<name>H2A22_CYRHA</name>
<protein>
    <recommendedName>
        <fullName>U4-theraphotoxin-Hhn1a</fullName>
        <shortName>U4-TRTX-Hhn1a</shortName>
    </recommendedName>
    <alternativeName>
        <fullName>Hainantoxin-II.22</fullName>
        <shortName>HNTX-II.22</shortName>
    </alternativeName>
    <alternativeName>
        <fullName>Peptide F8-20.15</fullName>
    </alternativeName>
</protein>
<reference key="1">
    <citation type="journal article" date="2010" name="J. Proteome Res.">
        <title>Molecular diversification of peptide toxins from the tarantula Haplopelma hainanum (Ornithoctonus hainana) venom based on transcriptomic, peptidomic, and genomic analyses.</title>
        <authorList>
            <person name="Tang X."/>
            <person name="Zhang Y."/>
            <person name="Hu W."/>
            <person name="Xu D."/>
            <person name="Tao H."/>
            <person name="Yang X."/>
            <person name="Li Y."/>
            <person name="Jiang L."/>
            <person name="Liang S."/>
        </authorList>
    </citation>
    <scope>NUCLEOTIDE SEQUENCE [LARGE SCALE GENOMIC DNA]</scope>
    <scope>PROTEIN SEQUENCE OF 49-85</scope>
    <scope>IDENTIFICATION BY MASS SPECTROMETRY</scope>
    <source>
        <tissue>Venom</tissue>
        <tissue>Venom gland</tissue>
    </source>
</reference>
<reference key="2">
    <citation type="journal article" date="2010" name="Dong Wu Xue Yan Jiu">
        <title>Isolation and characterization of Hainantoxin-II, a new neurotoxic peptide from the Chinese bird spider (Haplopelma hainanum).</title>
        <authorList>
            <person name="Pan J.Y."/>
            <person name="Yu Z.Q."/>
        </authorList>
    </citation>
    <scope>PROTEIN SEQUENCE OF 49-85</scope>
    <scope>FUNCTION</scope>
    <scope>MASS SPECTROMETRY</scope>
    <scope>TOXIC DOSE</scope>
    <source>
        <tissue>Venom</tissue>
    </source>
</reference>